<protein>
    <recommendedName>
        <fullName evidence="1">Putative adenylate kinase</fullName>
        <shortName evidence="1">AK</shortName>
        <ecNumber evidence="1">2.7.4.3</ecNumber>
    </recommendedName>
    <alternativeName>
        <fullName evidence="1">ATP-AMP transphosphorylase</fullName>
    </alternativeName>
</protein>
<organism>
    <name type="scientific">Thermoplasma acidophilum (strain ATCC 25905 / DSM 1728 / JCM 9062 / NBRC 15155 / AMRC-C165)</name>
    <dbReference type="NCBI Taxonomy" id="273075"/>
    <lineage>
        <taxon>Archaea</taxon>
        <taxon>Methanobacteriati</taxon>
        <taxon>Thermoplasmatota</taxon>
        <taxon>Thermoplasmata</taxon>
        <taxon>Thermoplasmatales</taxon>
        <taxon>Thermoplasmataceae</taxon>
        <taxon>Thermoplasma</taxon>
    </lineage>
</organism>
<evidence type="ECO:0000255" key="1">
    <source>
        <dbReference type="HAMAP-Rule" id="MF_00039"/>
    </source>
</evidence>
<evidence type="ECO:0000305" key="2"/>
<comment type="function">
    <text evidence="1">Broad-specificity nucleoside monophosphate (NMP) kinase that catalyzes the reversible transfer of the terminal phosphate group between nucleoside triphosphates and monophosphates. Also has ATPase activity. Involved in the late maturation steps of the 30S ribosomal particles, specifically 16S rRNA maturation. While NMP activity is not required for ribosome maturation, ATPase activity is. Associates transiently with small ribosomal subunit protein uS11. ATP hydrolysis breaks the interaction with uS11. May temporarily remove uS11 from the ribosome to enable a conformational change of the ribosomal RNA that is needed for the final maturation step of the small ribosomal subunit.</text>
</comment>
<comment type="catalytic activity">
    <reaction evidence="1">
        <text>AMP + ATP = 2 ADP</text>
        <dbReference type="Rhea" id="RHEA:12973"/>
        <dbReference type="ChEBI" id="CHEBI:30616"/>
        <dbReference type="ChEBI" id="CHEBI:456215"/>
        <dbReference type="ChEBI" id="CHEBI:456216"/>
        <dbReference type="EC" id="2.7.4.3"/>
    </reaction>
</comment>
<comment type="catalytic activity">
    <reaction evidence="1">
        <text>ATP + H2O = ADP + phosphate + H(+)</text>
        <dbReference type="Rhea" id="RHEA:13065"/>
        <dbReference type="ChEBI" id="CHEBI:15377"/>
        <dbReference type="ChEBI" id="CHEBI:15378"/>
        <dbReference type="ChEBI" id="CHEBI:30616"/>
        <dbReference type="ChEBI" id="CHEBI:43474"/>
        <dbReference type="ChEBI" id="CHEBI:456216"/>
    </reaction>
</comment>
<comment type="subunit">
    <text evidence="1">Interacts with uS11. Not a structural component of 40S pre-ribosomes, but transiently interacts with them by binding to uS11.</text>
</comment>
<comment type="similarity">
    <text evidence="1">Belongs to the adenylate kinase family. AK6 subfamily.</text>
</comment>
<comment type="sequence caution" evidence="2">
    <conflict type="erroneous initiation">
        <sequence resource="EMBL-CDS" id="CAC11710"/>
    </conflict>
</comment>
<feature type="chain" id="PRO_0000153917" description="Putative adenylate kinase">
    <location>
        <begin position="1"/>
        <end position="148"/>
    </location>
</feature>
<feature type="region of interest" description="NMP" evidence="1">
    <location>
        <begin position="28"/>
        <end position="44"/>
    </location>
</feature>
<feature type="region of interest" description="LID" evidence="1">
    <location>
        <begin position="91"/>
        <end position="101"/>
    </location>
</feature>
<feature type="binding site" evidence="1">
    <location>
        <position position="9"/>
    </location>
    <ligand>
        <name>ATP</name>
        <dbReference type="ChEBI" id="CHEBI:30616"/>
    </ligand>
</feature>
<feature type="binding site" evidence="1">
    <location>
        <position position="11"/>
    </location>
    <ligand>
        <name>ATP</name>
        <dbReference type="ChEBI" id="CHEBI:30616"/>
    </ligand>
</feature>
<feature type="binding site" evidence="1">
    <location>
        <position position="12"/>
    </location>
    <ligand>
        <name>ATP</name>
        <dbReference type="ChEBI" id="CHEBI:30616"/>
    </ligand>
</feature>
<feature type="binding site" evidence="1">
    <location>
        <position position="13"/>
    </location>
    <ligand>
        <name>ATP</name>
        <dbReference type="ChEBI" id="CHEBI:30616"/>
    </ligand>
</feature>
<feature type="binding site" evidence="1">
    <location>
        <position position="14"/>
    </location>
    <ligand>
        <name>ATP</name>
        <dbReference type="ChEBI" id="CHEBI:30616"/>
    </ligand>
</feature>
<feature type="binding site" evidence="1">
    <location>
        <position position="92"/>
    </location>
    <ligand>
        <name>ATP</name>
        <dbReference type="ChEBI" id="CHEBI:30616"/>
    </ligand>
</feature>
<gene>
    <name type="ordered locus">Ta0570</name>
</gene>
<name>KAD6_THEAC</name>
<keyword id="KW-0067">ATP-binding</keyword>
<keyword id="KW-0418">Kinase</keyword>
<keyword id="KW-0547">Nucleotide-binding</keyword>
<keyword id="KW-1185">Reference proteome</keyword>
<keyword id="KW-0690">Ribosome biogenesis</keyword>
<keyword id="KW-0698">rRNA processing</keyword>
<keyword id="KW-0808">Transferase</keyword>
<reference key="1">
    <citation type="journal article" date="2000" name="Nature">
        <title>The genome sequence of the thermoacidophilic scavenger Thermoplasma acidophilum.</title>
        <authorList>
            <person name="Ruepp A."/>
            <person name="Graml W."/>
            <person name="Santos-Martinez M.-L."/>
            <person name="Koretke K.K."/>
            <person name="Volker C."/>
            <person name="Mewes H.-W."/>
            <person name="Frishman D."/>
            <person name="Stocker S."/>
            <person name="Lupas A.N."/>
            <person name="Baumeister W."/>
        </authorList>
    </citation>
    <scope>NUCLEOTIDE SEQUENCE [LARGE SCALE GENOMIC DNA]</scope>
    <source>
        <strain>ATCC 25905 / DSM 1728 / JCM 9062 / NBRC 15155 / AMRC-C165</strain>
    </source>
</reference>
<proteinExistence type="inferred from homology"/>
<dbReference type="EC" id="2.7.4.3" evidence="1"/>
<dbReference type="EMBL" id="AL445064">
    <property type="protein sequence ID" value="CAC11710.1"/>
    <property type="status" value="ALT_INIT"/>
    <property type="molecule type" value="Genomic_DNA"/>
</dbReference>
<dbReference type="RefSeq" id="WP_241761883.1">
    <property type="nucleotide sequence ID" value="NC_002578.1"/>
</dbReference>
<dbReference type="SMR" id="Q9HKM7"/>
<dbReference type="STRING" id="273075.gene:9571790"/>
<dbReference type="PaxDb" id="273075-Ta0570"/>
<dbReference type="EnsemblBacteria" id="CAC11710">
    <property type="protein sequence ID" value="CAC11710"/>
    <property type="gene ID" value="CAC11710"/>
</dbReference>
<dbReference type="KEGG" id="tac:Ta0570"/>
<dbReference type="eggNOG" id="arCOG01038">
    <property type="taxonomic scope" value="Archaea"/>
</dbReference>
<dbReference type="HOGENOM" id="CLU_079096_0_1_2"/>
<dbReference type="InParanoid" id="Q9HKM7"/>
<dbReference type="Proteomes" id="UP000001024">
    <property type="component" value="Chromosome"/>
</dbReference>
<dbReference type="GO" id="GO:0004017">
    <property type="term" value="F:adenylate kinase activity"/>
    <property type="evidence" value="ECO:0007669"/>
    <property type="project" value="UniProtKB-UniRule"/>
</dbReference>
<dbReference type="GO" id="GO:0005524">
    <property type="term" value="F:ATP binding"/>
    <property type="evidence" value="ECO:0007669"/>
    <property type="project" value="UniProtKB-UniRule"/>
</dbReference>
<dbReference type="GO" id="GO:0016887">
    <property type="term" value="F:ATP hydrolysis activity"/>
    <property type="evidence" value="ECO:0007669"/>
    <property type="project" value="InterPro"/>
</dbReference>
<dbReference type="GO" id="GO:0042274">
    <property type="term" value="P:ribosomal small subunit biogenesis"/>
    <property type="evidence" value="ECO:0007669"/>
    <property type="project" value="UniProtKB-UniRule"/>
</dbReference>
<dbReference type="GO" id="GO:0006364">
    <property type="term" value="P:rRNA processing"/>
    <property type="evidence" value="ECO:0007669"/>
    <property type="project" value="UniProtKB-KW"/>
</dbReference>
<dbReference type="Gene3D" id="3.40.50.300">
    <property type="entry name" value="P-loop containing nucleotide triphosphate hydrolases"/>
    <property type="match status" value="1"/>
</dbReference>
<dbReference type="HAMAP" id="MF_00039">
    <property type="entry name" value="Adenylate_kinase_AK6"/>
    <property type="match status" value="1"/>
</dbReference>
<dbReference type="InterPro" id="IPR020618">
    <property type="entry name" value="Adenyl_kinase_AK6"/>
</dbReference>
<dbReference type="InterPro" id="IPR027417">
    <property type="entry name" value="P-loop_NTPase"/>
</dbReference>
<dbReference type="PANTHER" id="PTHR12595:SF0">
    <property type="entry name" value="ADENYLATE KINASE ISOENZYME 6"/>
    <property type="match status" value="1"/>
</dbReference>
<dbReference type="PANTHER" id="PTHR12595">
    <property type="entry name" value="POS9-ACTIVATING FACTOR FAP7-RELATED"/>
    <property type="match status" value="1"/>
</dbReference>
<dbReference type="Pfam" id="PF13238">
    <property type="entry name" value="AAA_18"/>
    <property type="match status" value="1"/>
</dbReference>
<dbReference type="SUPFAM" id="SSF52540">
    <property type="entry name" value="P-loop containing nucleoside triphosphate hydrolases"/>
    <property type="match status" value="1"/>
</dbReference>
<accession>Q9HKM7</accession>
<sequence length="148" mass="16263">MICISGIPGTGKSTICNLLNDLGYTCVEGNALAVKYGCLSGDEVDVDCLSDRMRSDNFKGIVAAHYAHLLPCNIVIILEADESALRQRMMDRGYSPEKIDENLDAQRSDTIYAESLERLPANRIFRIRNADLNVALSDILRIIGGRNG</sequence>